<feature type="chain" id="PRO_0000183475" description="Quinol oxidase subunit 1">
    <location>
        <begin position="1"/>
        <end position="517"/>
    </location>
</feature>
<feature type="transmembrane region" description="Helical" evidence="2">
    <location>
        <begin position="19"/>
        <end position="39"/>
    </location>
</feature>
<feature type="transmembrane region" description="Helical" evidence="2">
    <location>
        <begin position="64"/>
        <end position="84"/>
    </location>
</feature>
<feature type="transmembrane region" description="Helical" evidence="2">
    <location>
        <begin position="98"/>
        <end position="118"/>
    </location>
</feature>
<feature type="transmembrane region" description="Helical" evidence="2">
    <location>
        <begin position="150"/>
        <end position="170"/>
    </location>
</feature>
<feature type="transmembrane region" description="Helical" evidence="2">
    <location>
        <begin position="185"/>
        <end position="205"/>
    </location>
</feature>
<feature type="transmembrane region" description="Helical" evidence="2">
    <location>
        <begin position="226"/>
        <end position="246"/>
    </location>
</feature>
<feature type="transmembrane region" description="Helical" evidence="2">
    <location>
        <begin position="271"/>
        <end position="291"/>
    </location>
</feature>
<feature type="transmembrane region" description="Helical" evidence="2">
    <location>
        <begin position="303"/>
        <end position="323"/>
    </location>
</feature>
<feature type="transmembrane region" description="Helical" evidence="2">
    <location>
        <begin position="333"/>
        <end position="353"/>
    </location>
</feature>
<feature type="transmembrane region" description="Helical" evidence="2">
    <location>
        <begin position="369"/>
        <end position="389"/>
    </location>
</feature>
<feature type="transmembrane region" description="Helical" evidence="2">
    <location>
        <begin position="412"/>
        <end position="432"/>
    </location>
</feature>
<feature type="transmembrane region" description="Helical" evidence="2">
    <location>
        <begin position="460"/>
        <end position="480"/>
    </location>
</feature>
<feature type="binding site" description="axial binding residue" evidence="3">
    <location>
        <position position="65"/>
    </location>
    <ligand>
        <name>Fe(II)-heme a</name>
        <dbReference type="ChEBI" id="CHEBI:61715"/>
    </ligand>
    <ligandPart>
        <name>Fe</name>
        <dbReference type="ChEBI" id="CHEBI:18248"/>
    </ligandPart>
</feature>
<feature type="binding site" evidence="3">
    <location>
        <position position="235"/>
    </location>
    <ligand>
        <name>Cu cation</name>
        <dbReference type="ChEBI" id="CHEBI:23378"/>
        <label>B</label>
    </ligand>
</feature>
<feature type="binding site" evidence="3">
    <location>
        <position position="239"/>
    </location>
    <ligand>
        <name>Cu cation</name>
        <dbReference type="ChEBI" id="CHEBI:23378"/>
        <label>B</label>
    </ligand>
</feature>
<feature type="binding site" evidence="3">
    <location>
        <position position="284"/>
    </location>
    <ligand>
        <name>Cu cation</name>
        <dbReference type="ChEBI" id="CHEBI:23378"/>
        <label>B</label>
    </ligand>
</feature>
<feature type="binding site" evidence="3">
    <location>
        <position position="285"/>
    </location>
    <ligand>
        <name>Cu cation</name>
        <dbReference type="ChEBI" id="CHEBI:23378"/>
        <label>B</label>
    </ligand>
</feature>
<feature type="binding site" description="axial binding residue" evidence="3">
    <location>
        <position position="372"/>
    </location>
    <ligand>
        <name>heme a3</name>
        <dbReference type="ChEBI" id="CHEBI:83282"/>
    </ligand>
    <ligandPart>
        <name>Fe</name>
        <dbReference type="ChEBI" id="CHEBI:18248"/>
    </ligandPart>
</feature>
<feature type="binding site" description="axial binding residue" evidence="3">
    <location>
        <position position="374"/>
    </location>
    <ligand>
        <name>Fe(II)-heme a</name>
        <dbReference type="ChEBI" id="CHEBI:61715"/>
    </ligand>
    <ligandPart>
        <name>Fe</name>
        <dbReference type="ChEBI" id="CHEBI:18248"/>
    </ligandPart>
</feature>
<feature type="cross-link" description="1'-histidyl-3'-tyrosine (His-Tyr)" evidence="1">
    <location>
        <begin position="235"/>
        <end position="239"/>
    </location>
</feature>
<feature type="sequence conflict" description="In Ref. 1; CAA44510." evidence="3" ref="1">
    <original>A</original>
    <variation>R</variation>
    <location>
        <position position="478"/>
    </location>
</feature>
<comment type="function">
    <text>Catalyzes the reduction of oxygen to water.</text>
</comment>
<comment type="function">
    <text>Subunits I, II and III form the functional core of the enzyme complex. Electrons originating in caldariella quinol are transferred to the binuclear center formed by heme A3 and Cu(B).</text>
</comment>
<comment type="function">
    <text>Subunit I binds heme a and the bimetallic center.</text>
</comment>
<comment type="catalytic activity">
    <reaction>
        <text>2 a quinol + O2 = 2 a quinone + 2 H2O</text>
        <dbReference type="Rhea" id="RHEA:55376"/>
        <dbReference type="ChEBI" id="CHEBI:15377"/>
        <dbReference type="ChEBI" id="CHEBI:15379"/>
        <dbReference type="ChEBI" id="CHEBI:24646"/>
        <dbReference type="ChEBI" id="CHEBI:132124"/>
    </reaction>
</comment>
<comment type="subcellular location">
    <subcellularLocation>
        <location>Cell membrane</location>
        <topology>Multi-pass membrane protein</topology>
    </subcellularLocation>
</comment>
<comment type="similarity">
    <text evidence="3">Belongs to the heme-copper respiratory oxidase family.</text>
</comment>
<comment type="sequence caution" evidence="3">
    <conflict type="erroneous initiation">
        <sequence resource="EMBL-CDS" id="AAY81382"/>
    </conflict>
</comment>
<protein>
    <recommendedName>
        <fullName>Quinol oxidase subunit 1</fullName>
        <ecNumber>1.10.3.-</ecNumber>
    </recommendedName>
    <alternativeName>
        <fullName>Cytochrome aa3 subunit 1</fullName>
    </alternativeName>
    <alternativeName>
        <fullName>Oxidase aa(3) subunit 1</fullName>
    </alternativeName>
    <alternativeName>
        <fullName>Quinol oxidase polypeptide I</fullName>
    </alternativeName>
</protein>
<gene>
    <name type="primary">soxB</name>
    <name type="ordered locus">Saci_2088</name>
</gene>
<proteinExistence type="inferred from homology"/>
<organism>
    <name type="scientific">Sulfolobus acidocaldarius (strain ATCC 33909 / DSM 639 / JCM 8929 / NBRC 15157 / NCIMB 11770)</name>
    <dbReference type="NCBI Taxonomy" id="330779"/>
    <lineage>
        <taxon>Archaea</taxon>
        <taxon>Thermoproteota</taxon>
        <taxon>Thermoprotei</taxon>
        <taxon>Sulfolobales</taxon>
        <taxon>Sulfolobaceae</taxon>
        <taxon>Sulfolobus</taxon>
    </lineage>
</organism>
<keyword id="KW-1003">Cell membrane</keyword>
<keyword id="KW-0186">Copper</keyword>
<keyword id="KW-0249">Electron transport</keyword>
<keyword id="KW-0349">Heme</keyword>
<keyword id="KW-0408">Iron</keyword>
<keyword id="KW-0472">Membrane</keyword>
<keyword id="KW-0479">Metal-binding</keyword>
<keyword id="KW-0560">Oxidoreductase</keyword>
<keyword id="KW-1185">Reference proteome</keyword>
<keyword id="KW-0679">Respiratory chain</keyword>
<keyword id="KW-0812">Transmembrane</keyword>
<keyword id="KW-1133">Transmembrane helix</keyword>
<keyword id="KW-0813">Transport</keyword>
<accession>P98004</accession>
<accession>Q4J749</accession>
<sequence length="517" mass="57808">MSLIERIKNVVWPKDTLSVVWLYTIGSIFWLGVLGIAAMNLRTFLTYDQNSPNVGELYYSALTIHGWAAMIAFVPMAAAAVIGFSLYKSKLSIIHTKQMAIFFWLSNVLLGIAMAGSPDMGWYMYPPLAIESNSQFHAFLFYTTPQLMGMAYLVMSIAVILQTAAFVTLIADAYATKPKGERLNIFAAYGVAFSIVIAVTLPALAAATLWYTLYFFANVPVNNLLWAILFWFYGHPVVYYVPFPLFGALYYYIPQYAGRSLYSEKWARWNIYLLAIGTMGVWVHHLQTWPLPIVLREWVNLSTLILATGSGLTVLNLGLTIFTSRKYDWKDPVGMGALISLIGFILAGAQALVLPENSINPLFHNSYYVVGHFHLMIWTLIIMGYTTVFLDMLRTSFAGFNFSATSSKWMRIGMIWWTAPFMGVGYAMSVAGYLGFLRRMIAYPVIFQPYNLVESFLAEIGIPGLLLTLFVGMFDALAYASKQPVFSSPSVSSFSMQVDKGELVKKIDSEKGVNNVG</sequence>
<reference key="1">
    <citation type="journal article" date="1992" name="EMBO J.">
        <title>An archaebacterial terminal oxidase combines core structures of two mitochondrial respiratory complexes.</title>
        <authorList>
            <person name="Luebben M."/>
            <person name="Kolmerer B."/>
            <person name="Saraste M."/>
        </authorList>
    </citation>
    <scope>NUCLEOTIDE SEQUENCE [GENOMIC DNA]</scope>
    <source>
        <strain>ATCC 33909 / DSM 639 / JCM 8929 / NBRC 15157 / NCIMB 11770</strain>
    </source>
</reference>
<reference key="2">
    <citation type="journal article" date="2005" name="J. Bacteriol.">
        <title>The genome of Sulfolobus acidocaldarius, a model organism of the Crenarchaeota.</title>
        <authorList>
            <person name="Chen L."/>
            <person name="Bruegger K."/>
            <person name="Skovgaard M."/>
            <person name="Redder P."/>
            <person name="She Q."/>
            <person name="Torarinsson E."/>
            <person name="Greve B."/>
            <person name="Awayez M."/>
            <person name="Zibat A."/>
            <person name="Klenk H.-P."/>
            <person name="Garrett R.A."/>
        </authorList>
    </citation>
    <scope>NUCLEOTIDE SEQUENCE [LARGE SCALE GENOMIC DNA]</scope>
    <source>
        <strain>ATCC 33909 / DSM 639 / JCM 8929 / NBRC 15157 / NCIMB 11770</strain>
    </source>
</reference>
<dbReference type="EC" id="1.10.3.-"/>
<dbReference type="EMBL" id="X62643">
    <property type="protein sequence ID" value="CAA44510.1"/>
    <property type="molecule type" value="Genomic_DNA"/>
</dbReference>
<dbReference type="EMBL" id="CP000077">
    <property type="protein sequence ID" value="AAY81382.1"/>
    <property type="status" value="ALT_INIT"/>
    <property type="molecule type" value="Genomic_DNA"/>
</dbReference>
<dbReference type="PIR" id="S21042">
    <property type="entry name" value="S21042"/>
</dbReference>
<dbReference type="RefSeq" id="WP_015385766.1">
    <property type="nucleotide sequence ID" value="NC_007181.1"/>
</dbReference>
<dbReference type="SMR" id="P98004"/>
<dbReference type="STRING" id="330779.Saci_2088"/>
<dbReference type="TCDB" id="3.D.4.1.1">
    <property type="family name" value="the proton-translocating cytochrome oxidase (cox) superfamily"/>
</dbReference>
<dbReference type="GeneID" id="14552603"/>
<dbReference type="GeneID" id="78442448"/>
<dbReference type="KEGG" id="sai:Saci_2088"/>
<dbReference type="PATRIC" id="fig|330779.12.peg.2090"/>
<dbReference type="eggNOG" id="arCOG01238">
    <property type="taxonomic scope" value="Archaea"/>
</dbReference>
<dbReference type="HOGENOM" id="CLU_534881_0_0_2"/>
<dbReference type="BioCyc" id="MetaCyc:MONOMER-21018"/>
<dbReference type="BRENDA" id="7.1.1.4">
    <property type="organism ID" value="6160"/>
</dbReference>
<dbReference type="Proteomes" id="UP000001018">
    <property type="component" value="Chromosome"/>
</dbReference>
<dbReference type="GO" id="GO:0005886">
    <property type="term" value="C:plasma membrane"/>
    <property type="evidence" value="ECO:0007669"/>
    <property type="project" value="UniProtKB-SubCell"/>
</dbReference>
<dbReference type="GO" id="GO:0004129">
    <property type="term" value="F:cytochrome-c oxidase activity"/>
    <property type="evidence" value="ECO:0007669"/>
    <property type="project" value="InterPro"/>
</dbReference>
<dbReference type="GO" id="GO:0020037">
    <property type="term" value="F:heme binding"/>
    <property type="evidence" value="ECO:0007669"/>
    <property type="project" value="InterPro"/>
</dbReference>
<dbReference type="GO" id="GO:0046872">
    <property type="term" value="F:metal ion binding"/>
    <property type="evidence" value="ECO:0007669"/>
    <property type="project" value="UniProtKB-KW"/>
</dbReference>
<dbReference type="GO" id="GO:0016682">
    <property type="term" value="F:oxidoreductase activity, acting on diphenols and related substances as donors, oxygen as acceptor"/>
    <property type="evidence" value="ECO:0000250"/>
    <property type="project" value="UniProtKB"/>
</dbReference>
<dbReference type="GO" id="GO:0042773">
    <property type="term" value="P:ATP synthesis coupled electron transport"/>
    <property type="evidence" value="ECO:0000250"/>
    <property type="project" value="UniProtKB"/>
</dbReference>
<dbReference type="GO" id="GO:0015990">
    <property type="term" value="P:electron transport coupled proton transport"/>
    <property type="evidence" value="ECO:0007669"/>
    <property type="project" value="TreeGrafter"/>
</dbReference>
<dbReference type="CDD" id="cd00919">
    <property type="entry name" value="Heme_Cu_Oxidase_I"/>
    <property type="match status" value="1"/>
</dbReference>
<dbReference type="FunFam" id="1.20.210.10:FF:000011">
    <property type="entry name" value="Cytochrome c oxidase subunit I"/>
    <property type="match status" value="1"/>
</dbReference>
<dbReference type="Gene3D" id="1.20.210.10">
    <property type="entry name" value="Cytochrome c oxidase-like, subunit I domain"/>
    <property type="match status" value="1"/>
</dbReference>
<dbReference type="InterPro" id="IPR023616">
    <property type="entry name" value="Cyt_c_oxase-like_su1_dom"/>
</dbReference>
<dbReference type="InterPro" id="IPR036927">
    <property type="entry name" value="Cyt_c_oxase-like_su1_sf"/>
</dbReference>
<dbReference type="InterPro" id="IPR000883">
    <property type="entry name" value="Cyt_C_Oxase_1"/>
</dbReference>
<dbReference type="InterPro" id="IPR023615">
    <property type="entry name" value="Cyt_c_Oxase_su1_BS"/>
</dbReference>
<dbReference type="InterPro" id="IPR053628">
    <property type="entry name" value="Heme-copper_oxidase_sub1"/>
</dbReference>
<dbReference type="NCBIfam" id="NF041075">
    <property type="entry name" value="quin_ox_SoxB"/>
    <property type="match status" value="1"/>
</dbReference>
<dbReference type="PANTHER" id="PTHR10422">
    <property type="entry name" value="CYTOCHROME C OXIDASE SUBUNIT 1"/>
    <property type="match status" value="1"/>
</dbReference>
<dbReference type="PANTHER" id="PTHR10422:SF18">
    <property type="entry name" value="CYTOCHROME C OXIDASE SUBUNIT 1"/>
    <property type="match status" value="1"/>
</dbReference>
<dbReference type="Pfam" id="PF00115">
    <property type="entry name" value="COX1"/>
    <property type="match status" value="1"/>
</dbReference>
<dbReference type="PRINTS" id="PR01165">
    <property type="entry name" value="CYCOXIDASEI"/>
</dbReference>
<dbReference type="SUPFAM" id="SSF81442">
    <property type="entry name" value="Cytochrome c oxidase subunit I-like"/>
    <property type="match status" value="1"/>
</dbReference>
<dbReference type="PROSITE" id="PS50855">
    <property type="entry name" value="COX1"/>
    <property type="match status" value="1"/>
</dbReference>
<dbReference type="PROSITE" id="PS00077">
    <property type="entry name" value="COX1_CUB"/>
    <property type="match status" value="1"/>
</dbReference>
<evidence type="ECO:0000250" key="1"/>
<evidence type="ECO:0000255" key="2"/>
<evidence type="ECO:0000305" key="3"/>
<name>QOX1_SULAC</name>